<name>HIS4_RHOPT</name>
<proteinExistence type="inferred from homology"/>
<sequence>MILFPAIDLKNGQCVRLEQGDMARATVFNLDPAAQAQSFAAQGFQYLHVVDLDGAFAGKPMNAQAVEAMLKVVSMPVQLGGGIRDLKTIEAWLSKGIARVIIGTAAVRDPALVKEAAKAFPGRVAVGLDARDGNVAVEGWAESSQVTALDIAQRFEDAGVAAIIFTDIARDGLLKGINWDATIALAEAISIPVIASGGLASIEDVRTLLSPRAKKLEGAIAGRALYDGRLDPTEALALIGAAKAA</sequence>
<feature type="chain" id="PRO_1000190547" description="1-(5-phosphoribosyl)-5-[(5-phosphoribosylamino)methylideneamino] imidazole-4-carboxamide isomerase">
    <location>
        <begin position="1"/>
        <end position="245"/>
    </location>
</feature>
<feature type="active site" description="Proton acceptor" evidence="1">
    <location>
        <position position="8"/>
    </location>
</feature>
<feature type="active site" description="Proton donor" evidence="1">
    <location>
        <position position="129"/>
    </location>
</feature>
<gene>
    <name evidence="1" type="primary">hisA</name>
    <name type="ordered locus">Rpal_0314</name>
</gene>
<comment type="catalytic activity">
    <reaction evidence="1">
        <text>1-(5-phospho-beta-D-ribosyl)-5-[(5-phospho-beta-D-ribosylamino)methylideneamino]imidazole-4-carboxamide = 5-[(5-phospho-1-deoxy-D-ribulos-1-ylimino)methylamino]-1-(5-phospho-beta-D-ribosyl)imidazole-4-carboxamide</text>
        <dbReference type="Rhea" id="RHEA:15469"/>
        <dbReference type="ChEBI" id="CHEBI:58435"/>
        <dbReference type="ChEBI" id="CHEBI:58525"/>
        <dbReference type="EC" id="5.3.1.16"/>
    </reaction>
</comment>
<comment type="pathway">
    <text evidence="1">Amino-acid biosynthesis; L-histidine biosynthesis; L-histidine from 5-phospho-alpha-D-ribose 1-diphosphate: step 4/9.</text>
</comment>
<comment type="subcellular location">
    <subcellularLocation>
        <location evidence="1">Cytoplasm</location>
    </subcellularLocation>
</comment>
<comment type="similarity">
    <text evidence="1">Belongs to the HisA/HisF family.</text>
</comment>
<dbReference type="EC" id="5.3.1.16" evidence="1"/>
<dbReference type="EMBL" id="CP001096">
    <property type="protein sequence ID" value="ACE98874.1"/>
    <property type="molecule type" value="Genomic_DNA"/>
</dbReference>
<dbReference type="RefSeq" id="WP_011155880.1">
    <property type="nucleotide sequence ID" value="NC_011004.1"/>
</dbReference>
<dbReference type="SMR" id="B3Q950"/>
<dbReference type="GeneID" id="66891322"/>
<dbReference type="KEGG" id="rpt:Rpal_0314"/>
<dbReference type="HOGENOM" id="CLU_048577_1_1_5"/>
<dbReference type="OrthoDB" id="9807749at2"/>
<dbReference type="UniPathway" id="UPA00031">
    <property type="reaction ID" value="UER00009"/>
</dbReference>
<dbReference type="Proteomes" id="UP000001725">
    <property type="component" value="Chromosome"/>
</dbReference>
<dbReference type="GO" id="GO:0005737">
    <property type="term" value="C:cytoplasm"/>
    <property type="evidence" value="ECO:0007669"/>
    <property type="project" value="UniProtKB-SubCell"/>
</dbReference>
<dbReference type="GO" id="GO:0003949">
    <property type="term" value="F:1-(5-phosphoribosyl)-5-[(5-phosphoribosylamino)methylideneamino]imidazole-4-carboxamide isomerase activity"/>
    <property type="evidence" value="ECO:0007669"/>
    <property type="project" value="UniProtKB-UniRule"/>
</dbReference>
<dbReference type="GO" id="GO:0000105">
    <property type="term" value="P:L-histidine biosynthetic process"/>
    <property type="evidence" value="ECO:0007669"/>
    <property type="project" value="UniProtKB-UniRule"/>
</dbReference>
<dbReference type="GO" id="GO:0000162">
    <property type="term" value="P:L-tryptophan biosynthetic process"/>
    <property type="evidence" value="ECO:0007669"/>
    <property type="project" value="TreeGrafter"/>
</dbReference>
<dbReference type="CDD" id="cd04732">
    <property type="entry name" value="HisA"/>
    <property type="match status" value="1"/>
</dbReference>
<dbReference type="FunFam" id="3.20.20.70:FF:000009">
    <property type="entry name" value="1-(5-phosphoribosyl)-5-[(5-phosphoribosylamino)methylideneamino] imidazole-4-carboxamide isomerase"/>
    <property type="match status" value="1"/>
</dbReference>
<dbReference type="Gene3D" id="3.20.20.70">
    <property type="entry name" value="Aldolase class I"/>
    <property type="match status" value="1"/>
</dbReference>
<dbReference type="HAMAP" id="MF_01014">
    <property type="entry name" value="HisA"/>
    <property type="match status" value="1"/>
</dbReference>
<dbReference type="InterPro" id="IPR013785">
    <property type="entry name" value="Aldolase_TIM"/>
</dbReference>
<dbReference type="InterPro" id="IPR006062">
    <property type="entry name" value="His_biosynth"/>
</dbReference>
<dbReference type="InterPro" id="IPR006063">
    <property type="entry name" value="HisA_bact_arch"/>
</dbReference>
<dbReference type="InterPro" id="IPR044524">
    <property type="entry name" value="Isoase_HisA-like"/>
</dbReference>
<dbReference type="InterPro" id="IPR023016">
    <property type="entry name" value="Isoase_HisA-like_bact"/>
</dbReference>
<dbReference type="InterPro" id="IPR011060">
    <property type="entry name" value="RibuloseP-bd_barrel"/>
</dbReference>
<dbReference type="NCBIfam" id="TIGR00007">
    <property type="entry name" value="1-(5-phosphoribosyl)-5-[(5-phosphoribosylamino)methylideneamino]imidazole-4-carboxamide isomerase"/>
    <property type="match status" value="1"/>
</dbReference>
<dbReference type="NCBIfam" id="NF010112">
    <property type="entry name" value="PRK13585.1"/>
    <property type="match status" value="1"/>
</dbReference>
<dbReference type="PANTHER" id="PTHR43090">
    <property type="entry name" value="1-(5-PHOSPHORIBOSYL)-5-[(5-PHOSPHORIBOSYLAMINO)METHYLIDENEAMINO] IMIDAZOLE-4-CARBOXAMIDE ISOMERASE"/>
    <property type="match status" value="1"/>
</dbReference>
<dbReference type="PANTHER" id="PTHR43090:SF2">
    <property type="entry name" value="1-(5-PHOSPHORIBOSYL)-5-[(5-PHOSPHORIBOSYLAMINO)METHYLIDENEAMINO] IMIDAZOLE-4-CARBOXAMIDE ISOMERASE"/>
    <property type="match status" value="1"/>
</dbReference>
<dbReference type="Pfam" id="PF00977">
    <property type="entry name" value="His_biosynth"/>
    <property type="match status" value="1"/>
</dbReference>
<dbReference type="SUPFAM" id="SSF51366">
    <property type="entry name" value="Ribulose-phoshate binding barrel"/>
    <property type="match status" value="1"/>
</dbReference>
<evidence type="ECO:0000255" key="1">
    <source>
        <dbReference type="HAMAP-Rule" id="MF_01014"/>
    </source>
</evidence>
<organism>
    <name type="scientific">Rhodopseudomonas palustris (strain TIE-1)</name>
    <dbReference type="NCBI Taxonomy" id="395960"/>
    <lineage>
        <taxon>Bacteria</taxon>
        <taxon>Pseudomonadati</taxon>
        <taxon>Pseudomonadota</taxon>
        <taxon>Alphaproteobacteria</taxon>
        <taxon>Hyphomicrobiales</taxon>
        <taxon>Nitrobacteraceae</taxon>
        <taxon>Rhodopseudomonas</taxon>
    </lineage>
</organism>
<reference key="1">
    <citation type="submission" date="2008-05" db="EMBL/GenBank/DDBJ databases">
        <title>Complete sequence of Rhodopseudomonas palustris TIE-1.</title>
        <authorList>
            <consortium name="US DOE Joint Genome Institute"/>
            <person name="Lucas S."/>
            <person name="Copeland A."/>
            <person name="Lapidus A."/>
            <person name="Glavina del Rio T."/>
            <person name="Dalin E."/>
            <person name="Tice H."/>
            <person name="Pitluck S."/>
            <person name="Chain P."/>
            <person name="Malfatti S."/>
            <person name="Shin M."/>
            <person name="Vergez L."/>
            <person name="Lang D."/>
            <person name="Schmutz J."/>
            <person name="Larimer F."/>
            <person name="Land M."/>
            <person name="Hauser L."/>
            <person name="Kyrpides N."/>
            <person name="Mikhailova N."/>
            <person name="Emerson D."/>
            <person name="Newman D.K."/>
            <person name="Roden E."/>
            <person name="Richardson P."/>
        </authorList>
    </citation>
    <scope>NUCLEOTIDE SEQUENCE [LARGE SCALE GENOMIC DNA]</scope>
    <source>
        <strain>TIE-1</strain>
    </source>
</reference>
<accession>B3Q950</accession>
<keyword id="KW-0028">Amino-acid biosynthesis</keyword>
<keyword id="KW-0963">Cytoplasm</keyword>
<keyword id="KW-0368">Histidine biosynthesis</keyword>
<keyword id="KW-0413">Isomerase</keyword>
<protein>
    <recommendedName>
        <fullName evidence="1">1-(5-phosphoribosyl)-5-[(5-phosphoribosylamino)methylideneamino] imidazole-4-carboxamide isomerase</fullName>
        <ecNumber evidence="1">5.3.1.16</ecNumber>
    </recommendedName>
    <alternativeName>
        <fullName evidence="1">Phosphoribosylformimino-5-aminoimidazole carboxamide ribotide isomerase</fullName>
    </alternativeName>
</protein>